<protein>
    <recommendedName>
        <fullName evidence="1">Large ribosomal subunit protein bL28</fullName>
    </recommendedName>
    <alternativeName>
        <fullName evidence="3">50S ribosomal protein L28</fullName>
    </alternativeName>
</protein>
<feature type="chain" id="PRO_1000007318" description="Large ribosomal subunit protein bL28">
    <location>
        <begin position="1"/>
        <end position="77"/>
    </location>
</feature>
<feature type="region of interest" description="Disordered" evidence="2">
    <location>
        <begin position="1"/>
        <end position="20"/>
    </location>
</feature>
<keyword id="KW-0687">Ribonucleoprotein</keyword>
<keyword id="KW-0689">Ribosomal protein</keyword>
<name>RL28_PSEU2</name>
<organism>
    <name type="scientific">Pseudomonas syringae pv. syringae (strain B728a)</name>
    <dbReference type="NCBI Taxonomy" id="205918"/>
    <lineage>
        <taxon>Bacteria</taxon>
        <taxon>Pseudomonadati</taxon>
        <taxon>Pseudomonadota</taxon>
        <taxon>Gammaproteobacteria</taxon>
        <taxon>Pseudomonadales</taxon>
        <taxon>Pseudomonadaceae</taxon>
        <taxon>Pseudomonas</taxon>
        <taxon>Pseudomonas syringae</taxon>
    </lineage>
</organism>
<gene>
    <name evidence="1" type="primary">rpmB</name>
    <name type="ordered locus">Psyr_0224</name>
</gene>
<evidence type="ECO:0000255" key="1">
    <source>
        <dbReference type="HAMAP-Rule" id="MF_00373"/>
    </source>
</evidence>
<evidence type="ECO:0000256" key="2">
    <source>
        <dbReference type="SAM" id="MobiDB-lite"/>
    </source>
</evidence>
<evidence type="ECO:0000305" key="3"/>
<accession>Q4ZZX5</accession>
<comment type="similarity">
    <text evidence="1">Belongs to the bacterial ribosomal protein bL28 family.</text>
</comment>
<dbReference type="EMBL" id="CP000075">
    <property type="protein sequence ID" value="AAY35297.1"/>
    <property type="molecule type" value="Genomic_DNA"/>
</dbReference>
<dbReference type="RefSeq" id="WP_002551514.1">
    <property type="nucleotide sequence ID" value="NC_007005.1"/>
</dbReference>
<dbReference type="RefSeq" id="YP_233335.1">
    <property type="nucleotide sequence ID" value="NC_007005.1"/>
</dbReference>
<dbReference type="SMR" id="Q4ZZX5"/>
<dbReference type="STRING" id="205918.Psyr_0224"/>
<dbReference type="GeneID" id="96216561"/>
<dbReference type="KEGG" id="psb:Psyr_0224"/>
<dbReference type="PATRIC" id="fig|205918.7.peg.222"/>
<dbReference type="eggNOG" id="COG0227">
    <property type="taxonomic scope" value="Bacteria"/>
</dbReference>
<dbReference type="HOGENOM" id="CLU_064548_3_1_6"/>
<dbReference type="OrthoDB" id="9805609at2"/>
<dbReference type="Proteomes" id="UP000000426">
    <property type="component" value="Chromosome"/>
</dbReference>
<dbReference type="GO" id="GO:0022625">
    <property type="term" value="C:cytosolic large ribosomal subunit"/>
    <property type="evidence" value="ECO:0007669"/>
    <property type="project" value="TreeGrafter"/>
</dbReference>
<dbReference type="GO" id="GO:0003735">
    <property type="term" value="F:structural constituent of ribosome"/>
    <property type="evidence" value="ECO:0007669"/>
    <property type="project" value="InterPro"/>
</dbReference>
<dbReference type="GO" id="GO:0006412">
    <property type="term" value="P:translation"/>
    <property type="evidence" value="ECO:0007669"/>
    <property type="project" value="UniProtKB-UniRule"/>
</dbReference>
<dbReference type="FunFam" id="2.30.170.40:FF:000001">
    <property type="entry name" value="50S ribosomal protein L28"/>
    <property type="match status" value="1"/>
</dbReference>
<dbReference type="Gene3D" id="2.30.170.40">
    <property type="entry name" value="Ribosomal protein L28/L24"/>
    <property type="match status" value="1"/>
</dbReference>
<dbReference type="HAMAP" id="MF_00373">
    <property type="entry name" value="Ribosomal_bL28"/>
    <property type="match status" value="1"/>
</dbReference>
<dbReference type="InterPro" id="IPR026569">
    <property type="entry name" value="Ribosomal_bL28"/>
</dbReference>
<dbReference type="InterPro" id="IPR034704">
    <property type="entry name" value="Ribosomal_bL28/bL31-like_sf"/>
</dbReference>
<dbReference type="InterPro" id="IPR001383">
    <property type="entry name" value="Ribosomal_bL28_bact-type"/>
</dbReference>
<dbReference type="InterPro" id="IPR037147">
    <property type="entry name" value="Ribosomal_bL28_sf"/>
</dbReference>
<dbReference type="NCBIfam" id="TIGR00009">
    <property type="entry name" value="L28"/>
    <property type="match status" value="1"/>
</dbReference>
<dbReference type="PANTHER" id="PTHR13528">
    <property type="entry name" value="39S RIBOSOMAL PROTEIN L28, MITOCHONDRIAL"/>
    <property type="match status" value="1"/>
</dbReference>
<dbReference type="PANTHER" id="PTHR13528:SF2">
    <property type="entry name" value="LARGE RIBOSOMAL SUBUNIT PROTEIN BL28M"/>
    <property type="match status" value="1"/>
</dbReference>
<dbReference type="Pfam" id="PF00830">
    <property type="entry name" value="Ribosomal_L28"/>
    <property type="match status" value="1"/>
</dbReference>
<dbReference type="SUPFAM" id="SSF143800">
    <property type="entry name" value="L28p-like"/>
    <property type="match status" value="1"/>
</dbReference>
<reference key="1">
    <citation type="journal article" date="2005" name="Proc. Natl. Acad. Sci. U.S.A.">
        <title>Comparison of the complete genome sequences of Pseudomonas syringae pv. syringae B728a and pv. tomato DC3000.</title>
        <authorList>
            <person name="Feil H."/>
            <person name="Feil W.S."/>
            <person name="Chain P."/>
            <person name="Larimer F."/>
            <person name="Dibartolo G."/>
            <person name="Copeland A."/>
            <person name="Lykidis A."/>
            <person name="Trong S."/>
            <person name="Nolan M."/>
            <person name="Goltsman E."/>
            <person name="Thiel J."/>
            <person name="Malfatti S."/>
            <person name="Loper J.E."/>
            <person name="Lapidus A."/>
            <person name="Detter J.C."/>
            <person name="Land M."/>
            <person name="Richardson P.M."/>
            <person name="Kyrpides N.C."/>
            <person name="Ivanova N."/>
            <person name="Lindow S.E."/>
        </authorList>
    </citation>
    <scope>NUCLEOTIDE SEQUENCE [LARGE SCALE GENOMIC DNA]</scope>
    <source>
        <strain>B728a</strain>
    </source>
</reference>
<proteinExistence type="inferred from homology"/>
<sequence length="77" mass="8935">MSRVCQVTGKGPVTGNNISHANNKTRRRFLPNLQHHRFWVEGEKRFVRLRVSAKGMRIIDKRGIEVVLAELRRDGKI</sequence>